<name>MURB_VIBVY</name>
<accession>Q7MGQ8</accession>
<evidence type="ECO:0000255" key="1">
    <source>
        <dbReference type="HAMAP-Rule" id="MF_00037"/>
    </source>
</evidence>
<feature type="chain" id="PRO_0000179289" description="UDP-N-acetylenolpyruvoylglucosamine reductase">
    <location>
        <begin position="1"/>
        <end position="347"/>
    </location>
</feature>
<feature type="domain" description="FAD-binding PCMH-type" evidence="1">
    <location>
        <begin position="16"/>
        <end position="187"/>
    </location>
</feature>
<feature type="active site" evidence="1">
    <location>
        <position position="163"/>
    </location>
</feature>
<feature type="active site" description="Proton donor" evidence="1">
    <location>
        <position position="233"/>
    </location>
</feature>
<feature type="active site" evidence="1">
    <location>
        <position position="328"/>
    </location>
</feature>
<protein>
    <recommendedName>
        <fullName evidence="1">UDP-N-acetylenolpyruvoylglucosamine reductase</fullName>
        <ecNumber evidence="1">1.3.1.98</ecNumber>
    </recommendedName>
    <alternativeName>
        <fullName evidence="1">UDP-N-acetylmuramate dehydrogenase</fullName>
    </alternativeName>
</protein>
<sequence length="347" mass="38612">MQIKQNISLKPYHTFAIEQCSHYLVEVGSVDELVDIYANPDFRELPKLILGSGSNVLFTQPFSGVVVVNRLSGKTLSEDESFYYIHAEGGEDWPNLVEWCVQQGIGGLENLALIPGCAGSAPIQNIGAYGVEFKDVCQYVDILMLDDFSQRRLSAEECQFGYRDSVFKHALYNQCVVIAVGLKLPKTWQANNSYGPLQEIAEHELSPMSIFHKVCEVRREKLPDPKQIGNAGSFFKNPIIDKAHWQQLKAQFPNIVAYPAGEQMKVAAGWLIDQCDFKGVQVGGAQVHPKQALVLTNAQSCTAQDIIQLASLICDAVWDKYQIALEHEVRFISAVGETCLSELRVES</sequence>
<dbReference type="EC" id="1.3.1.98" evidence="1"/>
<dbReference type="EMBL" id="BA000037">
    <property type="protein sequence ID" value="BAC95934.1"/>
    <property type="molecule type" value="Genomic_DNA"/>
</dbReference>
<dbReference type="RefSeq" id="WP_011151387.1">
    <property type="nucleotide sequence ID" value="NC_005139.1"/>
</dbReference>
<dbReference type="SMR" id="Q7MGQ8"/>
<dbReference type="STRING" id="672.VV93_v1c28860"/>
<dbReference type="KEGG" id="vvy:VV3170"/>
<dbReference type="PATRIC" id="fig|196600.6.peg.3138"/>
<dbReference type="eggNOG" id="COG0812">
    <property type="taxonomic scope" value="Bacteria"/>
</dbReference>
<dbReference type="HOGENOM" id="CLU_035304_0_0_6"/>
<dbReference type="UniPathway" id="UPA00219"/>
<dbReference type="Proteomes" id="UP000002675">
    <property type="component" value="Chromosome I"/>
</dbReference>
<dbReference type="GO" id="GO:0005829">
    <property type="term" value="C:cytosol"/>
    <property type="evidence" value="ECO:0007669"/>
    <property type="project" value="TreeGrafter"/>
</dbReference>
<dbReference type="GO" id="GO:0071949">
    <property type="term" value="F:FAD binding"/>
    <property type="evidence" value="ECO:0007669"/>
    <property type="project" value="InterPro"/>
</dbReference>
<dbReference type="GO" id="GO:0008762">
    <property type="term" value="F:UDP-N-acetylmuramate dehydrogenase activity"/>
    <property type="evidence" value="ECO:0007669"/>
    <property type="project" value="UniProtKB-UniRule"/>
</dbReference>
<dbReference type="GO" id="GO:0051301">
    <property type="term" value="P:cell division"/>
    <property type="evidence" value="ECO:0007669"/>
    <property type="project" value="UniProtKB-KW"/>
</dbReference>
<dbReference type="GO" id="GO:0071555">
    <property type="term" value="P:cell wall organization"/>
    <property type="evidence" value="ECO:0007669"/>
    <property type="project" value="UniProtKB-KW"/>
</dbReference>
<dbReference type="GO" id="GO:0009252">
    <property type="term" value="P:peptidoglycan biosynthetic process"/>
    <property type="evidence" value="ECO:0007669"/>
    <property type="project" value="UniProtKB-UniRule"/>
</dbReference>
<dbReference type="GO" id="GO:0008360">
    <property type="term" value="P:regulation of cell shape"/>
    <property type="evidence" value="ECO:0007669"/>
    <property type="project" value="UniProtKB-KW"/>
</dbReference>
<dbReference type="Gene3D" id="3.30.465.10">
    <property type="match status" value="1"/>
</dbReference>
<dbReference type="Gene3D" id="3.90.78.10">
    <property type="entry name" value="UDP-N-acetylenolpyruvoylglucosamine reductase, C-terminal domain"/>
    <property type="match status" value="1"/>
</dbReference>
<dbReference type="Gene3D" id="3.30.43.10">
    <property type="entry name" value="Uridine Diphospho-n-acetylenolpyruvylglucosamine Reductase, domain 2"/>
    <property type="match status" value="1"/>
</dbReference>
<dbReference type="HAMAP" id="MF_00037">
    <property type="entry name" value="MurB"/>
    <property type="match status" value="1"/>
</dbReference>
<dbReference type="InterPro" id="IPR016166">
    <property type="entry name" value="FAD-bd_PCMH"/>
</dbReference>
<dbReference type="InterPro" id="IPR036318">
    <property type="entry name" value="FAD-bd_PCMH-like_sf"/>
</dbReference>
<dbReference type="InterPro" id="IPR016167">
    <property type="entry name" value="FAD-bd_PCMH_sub1"/>
</dbReference>
<dbReference type="InterPro" id="IPR016169">
    <property type="entry name" value="FAD-bd_PCMH_sub2"/>
</dbReference>
<dbReference type="InterPro" id="IPR003170">
    <property type="entry name" value="MurB"/>
</dbReference>
<dbReference type="InterPro" id="IPR011601">
    <property type="entry name" value="MurB_C"/>
</dbReference>
<dbReference type="InterPro" id="IPR036635">
    <property type="entry name" value="MurB_C_sf"/>
</dbReference>
<dbReference type="InterPro" id="IPR006094">
    <property type="entry name" value="Oxid_FAD_bind_N"/>
</dbReference>
<dbReference type="NCBIfam" id="TIGR00179">
    <property type="entry name" value="murB"/>
    <property type="match status" value="1"/>
</dbReference>
<dbReference type="NCBIfam" id="NF000755">
    <property type="entry name" value="PRK00046.1"/>
    <property type="match status" value="1"/>
</dbReference>
<dbReference type="PANTHER" id="PTHR21071">
    <property type="entry name" value="UDP-N-ACETYLENOLPYRUVOYLGLUCOSAMINE REDUCTASE"/>
    <property type="match status" value="1"/>
</dbReference>
<dbReference type="PANTHER" id="PTHR21071:SF4">
    <property type="entry name" value="UDP-N-ACETYLENOLPYRUVOYLGLUCOSAMINE REDUCTASE"/>
    <property type="match status" value="1"/>
</dbReference>
<dbReference type="Pfam" id="PF01565">
    <property type="entry name" value="FAD_binding_4"/>
    <property type="match status" value="1"/>
</dbReference>
<dbReference type="Pfam" id="PF02873">
    <property type="entry name" value="MurB_C"/>
    <property type="match status" value="1"/>
</dbReference>
<dbReference type="SUPFAM" id="SSF56176">
    <property type="entry name" value="FAD-binding/transporter-associated domain-like"/>
    <property type="match status" value="1"/>
</dbReference>
<dbReference type="SUPFAM" id="SSF56194">
    <property type="entry name" value="Uridine diphospho-N-Acetylenolpyruvylglucosamine reductase, MurB, C-terminal domain"/>
    <property type="match status" value="1"/>
</dbReference>
<dbReference type="PROSITE" id="PS51387">
    <property type="entry name" value="FAD_PCMH"/>
    <property type="match status" value="1"/>
</dbReference>
<keyword id="KW-0131">Cell cycle</keyword>
<keyword id="KW-0132">Cell division</keyword>
<keyword id="KW-0133">Cell shape</keyword>
<keyword id="KW-0961">Cell wall biogenesis/degradation</keyword>
<keyword id="KW-0963">Cytoplasm</keyword>
<keyword id="KW-0274">FAD</keyword>
<keyword id="KW-0285">Flavoprotein</keyword>
<keyword id="KW-0521">NADP</keyword>
<keyword id="KW-0560">Oxidoreductase</keyword>
<keyword id="KW-0573">Peptidoglycan synthesis</keyword>
<gene>
    <name evidence="1" type="primary">murB</name>
    <name type="ordered locus">VV3170</name>
</gene>
<organism>
    <name type="scientific">Vibrio vulnificus (strain YJ016)</name>
    <dbReference type="NCBI Taxonomy" id="196600"/>
    <lineage>
        <taxon>Bacteria</taxon>
        <taxon>Pseudomonadati</taxon>
        <taxon>Pseudomonadota</taxon>
        <taxon>Gammaproteobacteria</taxon>
        <taxon>Vibrionales</taxon>
        <taxon>Vibrionaceae</taxon>
        <taxon>Vibrio</taxon>
    </lineage>
</organism>
<comment type="function">
    <text evidence="1">Cell wall formation.</text>
</comment>
<comment type="catalytic activity">
    <reaction evidence="1">
        <text>UDP-N-acetyl-alpha-D-muramate + NADP(+) = UDP-N-acetyl-3-O-(1-carboxyvinyl)-alpha-D-glucosamine + NADPH + H(+)</text>
        <dbReference type="Rhea" id="RHEA:12248"/>
        <dbReference type="ChEBI" id="CHEBI:15378"/>
        <dbReference type="ChEBI" id="CHEBI:57783"/>
        <dbReference type="ChEBI" id="CHEBI:58349"/>
        <dbReference type="ChEBI" id="CHEBI:68483"/>
        <dbReference type="ChEBI" id="CHEBI:70757"/>
        <dbReference type="EC" id="1.3.1.98"/>
    </reaction>
</comment>
<comment type="cofactor">
    <cofactor evidence="1">
        <name>FAD</name>
        <dbReference type="ChEBI" id="CHEBI:57692"/>
    </cofactor>
</comment>
<comment type="pathway">
    <text evidence="1">Cell wall biogenesis; peptidoglycan biosynthesis.</text>
</comment>
<comment type="subcellular location">
    <subcellularLocation>
        <location evidence="1">Cytoplasm</location>
    </subcellularLocation>
</comment>
<comment type="similarity">
    <text evidence="1">Belongs to the MurB family.</text>
</comment>
<reference key="1">
    <citation type="journal article" date="2003" name="Genome Res.">
        <title>Comparative genome analysis of Vibrio vulnificus, a marine pathogen.</title>
        <authorList>
            <person name="Chen C.-Y."/>
            <person name="Wu K.-M."/>
            <person name="Chang Y.-C."/>
            <person name="Chang C.-H."/>
            <person name="Tsai H.-C."/>
            <person name="Liao T.-L."/>
            <person name="Liu Y.-M."/>
            <person name="Chen H.-J."/>
            <person name="Shen A.B.-T."/>
            <person name="Li J.-C."/>
            <person name="Su T.-L."/>
            <person name="Shao C.-P."/>
            <person name="Lee C.-T."/>
            <person name="Hor L.-I."/>
            <person name="Tsai S.-F."/>
        </authorList>
    </citation>
    <scope>NUCLEOTIDE SEQUENCE [LARGE SCALE GENOMIC DNA]</scope>
    <source>
        <strain>YJ016</strain>
    </source>
</reference>
<proteinExistence type="inferred from homology"/>